<dbReference type="EMBL" id="DQ234982">
    <property type="protein sequence ID" value="ABB72142.1"/>
    <property type="molecule type" value="Genomic_DNA"/>
</dbReference>
<dbReference type="RefSeq" id="XP_004052058.1">
    <property type="nucleotide sequence ID" value="XM_004052010.5"/>
</dbReference>
<dbReference type="SMR" id="A7X8B7"/>
<dbReference type="FunCoup" id="A7X8B7">
    <property type="interactions" value="923"/>
</dbReference>
<dbReference type="STRING" id="9593.ENSGGOP00000024814"/>
<dbReference type="Ensembl" id="ENSGGOT00000027848.2">
    <property type="protein sequence ID" value="ENSGGOP00000024814.1"/>
    <property type="gene ID" value="ENSGGOG00000016358.3"/>
</dbReference>
<dbReference type="GeneID" id="101152212"/>
<dbReference type="KEGG" id="ggo:101152212"/>
<dbReference type="CTD" id="5241"/>
<dbReference type="eggNOG" id="KOG3575">
    <property type="taxonomic scope" value="Eukaryota"/>
</dbReference>
<dbReference type="GeneTree" id="ENSGT00940000159713"/>
<dbReference type="InParanoid" id="A7X8B7"/>
<dbReference type="OMA" id="PDLILNX"/>
<dbReference type="OrthoDB" id="15254at9604"/>
<dbReference type="Proteomes" id="UP000001519">
    <property type="component" value="Chromosome 11"/>
</dbReference>
<dbReference type="Bgee" id="ENSGGOG00000016358">
    <property type="expression patterns" value="Expressed in heart and 1 other cell type or tissue"/>
</dbReference>
<dbReference type="GO" id="GO:0000785">
    <property type="term" value="C:chromatin"/>
    <property type="evidence" value="ECO:0000318"/>
    <property type="project" value="GO_Central"/>
</dbReference>
<dbReference type="GO" id="GO:0005737">
    <property type="term" value="C:cytoplasm"/>
    <property type="evidence" value="ECO:0007669"/>
    <property type="project" value="UniProtKB-SubCell"/>
</dbReference>
<dbReference type="GO" id="GO:0005654">
    <property type="term" value="C:nucleoplasm"/>
    <property type="evidence" value="ECO:0007669"/>
    <property type="project" value="UniProtKB-ARBA"/>
</dbReference>
<dbReference type="GO" id="GO:0005634">
    <property type="term" value="C:nucleus"/>
    <property type="evidence" value="ECO:0000318"/>
    <property type="project" value="GO_Central"/>
</dbReference>
<dbReference type="GO" id="GO:0005886">
    <property type="term" value="C:plasma membrane"/>
    <property type="evidence" value="ECO:0007669"/>
    <property type="project" value="Ensembl"/>
</dbReference>
<dbReference type="GO" id="GO:0051117">
    <property type="term" value="F:ATPase binding"/>
    <property type="evidence" value="ECO:0007669"/>
    <property type="project" value="Ensembl"/>
</dbReference>
<dbReference type="GO" id="GO:0001228">
    <property type="term" value="F:DNA-binding transcription activator activity, RNA polymerase II-specific"/>
    <property type="evidence" value="ECO:0007669"/>
    <property type="project" value="Ensembl"/>
</dbReference>
<dbReference type="GO" id="GO:0034056">
    <property type="term" value="F:estrogen response element binding"/>
    <property type="evidence" value="ECO:0000318"/>
    <property type="project" value="GO_Central"/>
</dbReference>
<dbReference type="GO" id="GO:0042802">
    <property type="term" value="F:identical protein binding"/>
    <property type="evidence" value="ECO:0007669"/>
    <property type="project" value="Ensembl"/>
</dbReference>
<dbReference type="GO" id="GO:0004879">
    <property type="term" value="F:nuclear receptor activity"/>
    <property type="evidence" value="ECO:0000318"/>
    <property type="project" value="GO_Central"/>
</dbReference>
<dbReference type="GO" id="GO:0003707">
    <property type="term" value="F:nuclear steroid receptor activity"/>
    <property type="evidence" value="ECO:0007669"/>
    <property type="project" value="Ensembl"/>
</dbReference>
<dbReference type="GO" id="GO:0005496">
    <property type="term" value="F:steroid binding"/>
    <property type="evidence" value="ECO:0007669"/>
    <property type="project" value="UniProtKB-KW"/>
</dbReference>
<dbReference type="GO" id="GO:0001223">
    <property type="term" value="F:transcription coactivator binding"/>
    <property type="evidence" value="ECO:0007669"/>
    <property type="project" value="Ensembl"/>
</dbReference>
<dbReference type="GO" id="GO:0008270">
    <property type="term" value="F:zinc ion binding"/>
    <property type="evidence" value="ECO:0007669"/>
    <property type="project" value="UniProtKB-KW"/>
</dbReference>
<dbReference type="GO" id="GO:0002071">
    <property type="term" value="P:glandular epithelial cell maturation"/>
    <property type="evidence" value="ECO:0007669"/>
    <property type="project" value="Ensembl"/>
</dbReference>
<dbReference type="GO" id="GO:0048286">
    <property type="term" value="P:lung alveolus development"/>
    <property type="evidence" value="ECO:0007669"/>
    <property type="project" value="Ensembl"/>
</dbReference>
<dbReference type="GO" id="GO:0051457">
    <property type="term" value="P:maintenance of protein location in nucleus"/>
    <property type="evidence" value="ECO:0007669"/>
    <property type="project" value="Ensembl"/>
</dbReference>
<dbReference type="GO" id="GO:0010629">
    <property type="term" value="P:negative regulation of gene expression"/>
    <property type="evidence" value="ECO:0007669"/>
    <property type="project" value="Ensembl"/>
</dbReference>
<dbReference type="GO" id="GO:0030518">
    <property type="term" value="P:nuclear receptor-mediated steroid hormone signaling pathway"/>
    <property type="evidence" value="ECO:0000318"/>
    <property type="project" value="GO_Central"/>
</dbReference>
<dbReference type="GO" id="GO:0001542">
    <property type="term" value="P:ovulation from ovarian follicle"/>
    <property type="evidence" value="ECO:0007669"/>
    <property type="project" value="Ensembl"/>
</dbReference>
<dbReference type="GO" id="GO:0038001">
    <property type="term" value="P:paracrine signaling"/>
    <property type="evidence" value="ECO:0007669"/>
    <property type="project" value="Ensembl"/>
</dbReference>
<dbReference type="GO" id="GO:0050847">
    <property type="term" value="P:progesterone receptor signaling pathway"/>
    <property type="evidence" value="ECO:0007669"/>
    <property type="project" value="Ensembl"/>
</dbReference>
<dbReference type="GO" id="GO:0050678">
    <property type="term" value="P:regulation of epithelial cell proliferation"/>
    <property type="evidence" value="ECO:0007669"/>
    <property type="project" value="Ensembl"/>
</dbReference>
<dbReference type="GO" id="GO:0006357">
    <property type="term" value="P:regulation of transcription by RNA polymerase II"/>
    <property type="evidence" value="ECO:0000318"/>
    <property type="project" value="GO_Central"/>
</dbReference>
<dbReference type="GO" id="GO:0060748">
    <property type="term" value="P:tertiary branching involved in mammary gland duct morphogenesis"/>
    <property type="evidence" value="ECO:0007669"/>
    <property type="project" value="Ensembl"/>
</dbReference>
<dbReference type="CDD" id="cd07172">
    <property type="entry name" value="NR_DBD_GR_PR"/>
    <property type="match status" value="1"/>
</dbReference>
<dbReference type="CDD" id="cd07074">
    <property type="entry name" value="NR_LBD_PR"/>
    <property type="match status" value="1"/>
</dbReference>
<dbReference type="FunFam" id="1.10.565.10:FF:000004">
    <property type="entry name" value="Androgen receptor variant"/>
    <property type="match status" value="1"/>
</dbReference>
<dbReference type="FunFam" id="3.30.50.10:FF:000027">
    <property type="entry name" value="Progesterone receptor"/>
    <property type="match status" value="1"/>
</dbReference>
<dbReference type="Gene3D" id="3.30.50.10">
    <property type="entry name" value="Erythroid Transcription Factor GATA-1, subunit A"/>
    <property type="match status" value="1"/>
</dbReference>
<dbReference type="Gene3D" id="1.10.565.10">
    <property type="entry name" value="Retinoid X Receptor"/>
    <property type="match status" value="1"/>
</dbReference>
<dbReference type="InterPro" id="IPR035500">
    <property type="entry name" value="NHR-like_dom_sf"/>
</dbReference>
<dbReference type="InterPro" id="IPR000536">
    <property type="entry name" value="Nucl_hrmn_rcpt_lig-bd"/>
</dbReference>
<dbReference type="InterPro" id="IPR050200">
    <property type="entry name" value="Nuclear_hormone_rcpt_NR3"/>
</dbReference>
<dbReference type="InterPro" id="IPR001723">
    <property type="entry name" value="Nuclear_hrmn_rcpt"/>
</dbReference>
<dbReference type="InterPro" id="IPR000128">
    <property type="entry name" value="Progest_rcpt"/>
</dbReference>
<dbReference type="InterPro" id="IPR001628">
    <property type="entry name" value="Znf_hrmn_rcpt"/>
</dbReference>
<dbReference type="InterPro" id="IPR013088">
    <property type="entry name" value="Znf_NHR/GATA"/>
</dbReference>
<dbReference type="PANTHER" id="PTHR48092">
    <property type="entry name" value="KNIRPS-RELATED PROTEIN-RELATED"/>
    <property type="match status" value="1"/>
</dbReference>
<dbReference type="Pfam" id="PF00104">
    <property type="entry name" value="Hormone_recep"/>
    <property type="match status" value="1"/>
</dbReference>
<dbReference type="Pfam" id="PF02161">
    <property type="entry name" value="Prog_receptor"/>
    <property type="match status" value="1"/>
</dbReference>
<dbReference type="Pfam" id="PF00105">
    <property type="entry name" value="zf-C4"/>
    <property type="match status" value="1"/>
</dbReference>
<dbReference type="PRINTS" id="PR00544">
    <property type="entry name" value="PROGESTRONER"/>
</dbReference>
<dbReference type="PRINTS" id="PR00398">
    <property type="entry name" value="STRDHORMONER"/>
</dbReference>
<dbReference type="PRINTS" id="PR00047">
    <property type="entry name" value="STROIDFINGER"/>
</dbReference>
<dbReference type="SMART" id="SM00430">
    <property type="entry name" value="HOLI"/>
    <property type="match status" value="1"/>
</dbReference>
<dbReference type="SMART" id="SM00399">
    <property type="entry name" value="ZnF_C4"/>
    <property type="match status" value="1"/>
</dbReference>
<dbReference type="SUPFAM" id="SSF57716">
    <property type="entry name" value="Glucocorticoid receptor-like (DNA-binding domain)"/>
    <property type="match status" value="1"/>
</dbReference>
<dbReference type="SUPFAM" id="SSF48508">
    <property type="entry name" value="Nuclear receptor ligand-binding domain"/>
    <property type="match status" value="1"/>
</dbReference>
<dbReference type="PROSITE" id="PS51843">
    <property type="entry name" value="NR_LBD"/>
    <property type="match status" value="1"/>
</dbReference>
<dbReference type="PROSITE" id="PS00031">
    <property type="entry name" value="NUCLEAR_REC_DBD_1"/>
    <property type="match status" value="1"/>
</dbReference>
<dbReference type="PROSITE" id="PS51030">
    <property type="entry name" value="NUCLEAR_REC_DBD_2"/>
    <property type="match status" value="1"/>
</dbReference>
<feature type="chain" id="PRO_0000375854" description="Progesterone receptor">
    <location>
        <begin position="1"/>
        <end position="933"/>
    </location>
</feature>
<feature type="domain" description="NR LBD" evidence="6">
    <location>
        <begin position="679"/>
        <end position="913"/>
    </location>
</feature>
<feature type="DNA-binding region" description="Nuclear receptor" evidence="5">
    <location>
        <begin position="567"/>
        <end position="639"/>
    </location>
</feature>
<feature type="zinc finger region" description="NR C4-type" evidence="5">
    <location>
        <begin position="567"/>
        <end position="587"/>
    </location>
</feature>
<feature type="zinc finger region" description="NR C4-type" evidence="5">
    <location>
        <begin position="603"/>
        <end position="627"/>
    </location>
</feature>
<feature type="region of interest" description="Modulating, Pro-Rich">
    <location>
        <begin position="1"/>
        <end position="566"/>
    </location>
</feature>
<feature type="region of interest" description="Disordered" evidence="7">
    <location>
        <begin position="1"/>
        <end position="256"/>
    </location>
</feature>
<feature type="region of interest" description="AF3; mediates transcriptional activation" evidence="2">
    <location>
        <begin position="1"/>
        <end position="164"/>
    </location>
</feature>
<feature type="region of interest" description="Mediates transcriptional transrepression" evidence="2">
    <location>
        <begin position="165"/>
        <end position="305"/>
    </location>
</feature>
<feature type="region of interest" description="Disordered" evidence="7">
    <location>
        <begin position="331"/>
        <end position="378"/>
    </location>
</feature>
<feature type="region of interest" description="Disordered" evidence="7">
    <location>
        <begin position="415"/>
        <end position="452"/>
    </location>
</feature>
<feature type="region of interest" description="AF1; mediates transcriptional activation" evidence="2">
    <location>
        <begin position="456"/>
        <end position="546"/>
    </location>
</feature>
<feature type="region of interest" description="AF2; mediates transcriptional activation" evidence="2">
    <location>
        <begin position="687"/>
        <end position="933"/>
    </location>
</feature>
<feature type="short sequence motif" description="LXXL motif 1" evidence="2">
    <location>
        <begin position="55"/>
        <end position="59"/>
    </location>
</feature>
<feature type="short sequence motif" description="LXXL motif 2" evidence="2">
    <location>
        <begin position="115"/>
        <end position="119"/>
    </location>
</feature>
<feature type="short sequence motif" description="Nuclear localization signal" evidence="4">
    <location>
        <begin position="183"/>
        <end position="187"/>
    </location>
</feature>
<feature type="compositionally biased region" description="Acidic residues" evidence="7">
    <location>
        <begin position="220"/>
        <end position="231"/>
    </location>
</feature>
<feature type="compositionally biased region" description="Low complexity" evidence="7">
    <location>
        <begin position="232"/>
        <end position="246"/>
    </location>
</feature>
<feature type="compositionally biased region" description="Low complexity" evidence="7">
    <location>
        <begin position="335"/>
        <end position="350"/>
    </location>
</feature>
<feature type="compositionally biased region" description="Pro residues" evidence="7">
    <location>
        <begin position="418"/>
        <end position="433"/>
    </location>
</feature>
<feature type="compositionally biased region" description="Low complexity" evidence="7">
    <location>
        <begin position="434"/>
        <end position="452"/>
    </location>
</feature>
<feature type="binding site" evidence="2">
    <location>
        <position position="766"/>
    </location>
    <ligand>
        <name>progesterone</name>
        <dbReference type="ChEBI" id="CHEBI:17026"/>
    </ligand>
</feature>
<feature type="modified residue" description="Phosphoserine" evidence="2">
    <location>
        <position position="20"/>
    </location>
</feature>
<feature type="modified residue" description="Phosphoserine" evidence="2">
    <location>
        <position position="81"/>
    </location>
</feature>
<feature type="modified residue" description="Phosphoserine" evidence="2">
    <location>
        <position position="130"/>
    </location>
</feature>
<feature type="modified residue" description="Phosphoserine" evidence="2">
    <location>
        <position position="162"/>
    </location>
</feature>
<feature type="modified residue" description="Phosphoserine" evidence="2">
    <location>
        <position position="190"/>
    </location>
</feature>
<feature type="modified residue" description="Phosphoserine" evidence="2">
    <location>
        <position position="213"/>
    </location>
</feature>
<feature type="modified residue" description="Phosphoserine; by MAPK1" evidence="2">
    <location>
        <position position="294"/>
    </location>
</feature>
<feature type="modified residue" description="Phosphoserine; by MAPK" evidence="2">
    <location>
        <position position="345"/>
    </location>
</feature>
<feature type="modified residue" description="Phosphoserine; by CDK2" evidence="2">
    <location>
        <position position="400"/>
    </location>
</feature>
<feature type="modified residue" description="Phosphoserine" evidence="2">
    <location>
        <position position="676"/>
    </location>
</feature>
<feature type="cross-link" description="Glycyl lysine isopeptide (Lys-Gly) (interchain with G-Cter in SUMO); alternate" evidence="1">
    <location>
        <position position="388"/>
    </location>
</feature>
<feature type="cross-link" description="Glycyl lysine isopeptide (Lys-Gly) (interchain with G-Cter in ubiquitin); alternate" evidence="2">
    <location>
        <position position="388"/>
    </location>
</feature>
<feature type="cross-link" description="Glycyl lysine isopeptide (Lys-Gly) (interchain with G-Cter in SUMO)" evidence="1">
    <location>
        <position position="531"/>
    </location>
</feature>
<proteinExistence type="inferred from homology"/>
<gene>
    <name type="primary">PGR</name>
    <name type="synonym">NR3C3</name>
</gene>
<name>PRGR_GORGO</name>
<sequence>MTELKAKGPRAPHVAGGPPSPEVGSPLLCRPAAGPYPGSQTSDTLPEVSAIPISLDGLLFPRPCQGQDPSDEKTQDQQSLSDVEGAYSRAEATRGAGGSSSSPPEKDSGLLDSVLETLLAPSGPGQSQPSPPACEVTSSWCLFGPELPEDPPAAPATQGVLSPLMSRSGGKAGDSSGTAAAHKVLPRGLSPSRQLLLPVSGSPHWSGAPVKPSPQPAAVEVEEEDGSESEESAGPLLKGKPRALGGAAAGGGAAAVPPGAAAGGVALVPKEDSRFSAPRVALVEQDAPMAPGRSPLATTVMDFIHVPILPLNHALLAARTRQLLEDESYDGGAGAASAFAPPRSSPSASSTPVAVGDFPDCAYPPDAEPKDDAYPLYSDFQPPALKIKEEEEGAEASARSPRSYLVAGANPAAFPDFPLGPPPPLPPRAPPSRPGEAAVTAAPASASVSSASSSGSTLECILYKAEGAPPQQGPFAPPPCKAPGASGCLLPRDGLPSTSASAAAAGAAPALYPALGLNGLPQLGYQAAVLKEGLPQVYPPYLNYLRPDSEASQSPQYSFESLPQKICLICGDEASGCHYGVLTCGSCKVFFKRAMEGQHNYLCAGRNDCIVDKIRRKNCPACRLRKCCQAGMVLGGRKFKKFNKVRVVRALDAVALPQPVGIPNESQALSQRFTFSPGQDIQLIPPLINLLMSIEPDVIYAGHDNTKPDTSSSLLTSLNQLGERQLLSVVKWSKSLPGFRNLHIDDQITLIQYSWMSLMVFGLGWRSYKHVSGQMLYFAPDLILNEQRMKESSFYSLCLTMWQIPQEFVKLQVSQEEFLCMKVLLLLNTIPLEGLRSQTQFEEMRSSYIRELIKAIGLRQKGVVSSSQRFYQLTKLLDNLHDLVKQLHLYCLNTFIQSRALSVEFPEMMSEVIAAQLPKILAGMVKPLLFHKK</sequence>
<comment type="function">
    <text evidence="2">The steroid hormones and their receptors are involved in the regulation of eukaryotic gene expression and affect cellular proliferation and differentiation in target tissues. Transcriptional activator of several progesteron-dependent promoters in a variety of cell types. Involved in activation of SRC-dependent MAPK signaling on hormone stimulation.</text>
</comment>
<comment type="subunit">
    <text evidence="2 3">Interacts with SMARD1 and UNC45A. Interacts with CUEDC2; the interaction promotes ubiquitination, decreases sumoylation, and represses transcriptional activity. Interacts with PIAS3; the interaction promotes sumoylation of PR in a hormone-dependent manner, inhibits DNA-binding, and alters nuclear export. Interacts with SP1; the interaction requires ligand-induced phosphorylation on Ser-345 by ERK1/2-MAPK. Interacts with PRMT2. Interacts with NCOA2 and NCOA1. Interacts with KLF9. Interacts with GTF2B (By similarity).</text>
</comment>
<comment type="subcellular location">
    <subcellularLocation>
        <location>Nucleus</location>
    </subcellularLocation>
    <subcellularLocation>
        <location>Cytoplasm</location>
    </subcellularLocation>
    <text evidence="1">Nucleoplasmic shuttling is both hormone- and cell cycle-dependent. On hormone stimulation, retained in the cytoplasm in the G(1) and G(2)/M phases (By similarity).</text>
</comment>
<comment type="domain">
    <text>Composed of three domains: a modulating N-terminal domain, a DNA-binding domain and a C-terminal ligand-binding domain.</text>
</comment>
<comment type="PTM">
    <text evidence="1">Phosphorylated on multiple serine sites. Several of these sites are hormone-dependent. Phosphorylation on Ser-294 is highly hormone-dependent and modulates ubiquitination and sumoylation on Lys-388. Phosphorylation on Ser-102 and Ser-345 also requires induction by hormone. Basal phosphorylation on Ser-81, Ser-162, Ser-190 and Ser-400 is increased in response to progesterone and can be phosphorylated in vitro by the CDK2-A1 complex. Increased levels of phosphorylation on Ser-400 also in the presence of EGF, heregulin, IGF, PMA and FBS. Phosphorylation at this site by CDK2 is ligand-independent, and increases nuclear translocation and transcriptional activity. Phosphorylation at Ser-162 and Ser-294, but not at Ser-190, is impaired during the G(2)/M phase of the cell cycle. Phosphorylation on Ser-345 by ERK1/2 MAPK is required for interaction with SP1 (By similarity).</text>
</comment>
<comment type="PTM">
    <text evidence="1">Sumoylation is hormone-dependent and represses transcriptional activity. Sumoylation on all three sites is enhanced by PIAS3. Desumoylated by SENP1. Sumoylation on Lys-388, the main site of sumoylation, is repressed by ubiquitination on the same site, and modulated by phosphorylation at Ser-294 (By similarity).</text>
</comment>
<comment type="PTM">
    <text evidence="2">Ubiquitination is hormone-dependent and represses sumoylation on the same site (By similarity). Promoted by MAPK-mediated phosphorylation on Ser-294 (By similarity). Ubiquitinated by UBR5, leading to its degradation: UBR5 specifically recognizes and binds ligand-bound PGR when it is not associated with coactivators (NCOAs) (By similarity). In presence of NCOAs, the UBR5-degron is not accessible, preventing its ubiquitination and degradation (By similarity).</text>
</comment>
<comment type="PTM">
    <text evidence="1">Palmitoylated by ZDHHC7 and ZDHHC21. Palmitoylation is required for plasma membrane targeting and for rapid intracellular signaling via ERK and AKT kinases and cAMP generation (By similarity).</text>
</comment>
<comment type="similarity">
    <text evidence="8">Belongs to the nuclear hormone receptor family.</text>
</comment>
<reference key="1">
    <citation type="journal article" date="2008" name="Mol. Phylogenet. Evol.">
        <title>The human progesterone receptor shows evidence of adaptive evolution associated with its ability to act as a transcription factor.</title>
        <authorList>
            <person name="Chen C."/>
            <person name="Opazo J.C."/>
            <person name="Erez O."/>
            <person name="Uddin M."/>
            <person name="Santolaya-Forgas J."/>
            <person name="Goodman M."/>
            <person name="Grossman L.I."/>
            <person name="Romero R."/>
            <person name="Wildman D.E."/>
        </authorList>
    </citation>
    <scope>NUCLEOTIDE SEQUENCE [GENOMIC DNA]</scope>
</reference>
<organism>
    <name type="scientific">Gorilla gorilla gorilla</name>
    <name type="common">Western lowland gorilla</name>
    <dbReference type="NCBI Taxonomy" id="9595"/>
    <lineage>
        <taxon>Eukaryota</taxon>
        <taxon>Metazoa</taxon>
        <taxon>Chordata</taxon>
        <taxon>Craniata</taxon>
        <taxon>Vertebrata</taxon>
        <taxon>Euteleostomi</taxon>
        <taxon>Mammalia</taxon>
        <taxon>Eutheria</taxon>
        <taxon>Euarchontoglires</taxon>
        <taxon>Primates</taxon>
        <taxon>Haplorrhini</taxon>
        <taxon>Catarrhini</taxon>
        <taxon>Hominidae</taxon>
        <taxon>Gorilla</taxon>
    </lineage>
</organism>
<accession>A7X8B7</accession>
<evidence type="ECO:0000250" key="1"/>
<evidence type="ECO:0000250" key="2">
    <source>
        <dbReference type="UniProtKB" id="P06401"/>
    </source>
</evidence>
<evidence type="ECO:0000250" key="3">
    <source>
        <dbReference type="UniProtKB" id="Q00175"/>
    </source>
</evidence>
<evidence type="ECO:0000255" key="4"/>
<evidence type="ECO:0000255" key="5">
    <source>
        <dbReference type="PROSITE-ProRule" id="PRU00407"/>
    </source>
</evidence>
<evidence type="ECO:0000255" key="6">
    <source>
        <dbReference type="PROSITE-ProRule" id="PRU01189"/>
    </source>
</evidence>
<evidence type="ECO:0000256" key="7">
    <source>
        <dbReference type="SAM" id="MobiDB-lite"/>
    </source>
</evidence>
<evidence type="ECO:0000305" key="8"/>
<protein>
    <recommendedName>
        <fullName>Progesterone receptor</fullName>
        <shortName>PR</shortName>
    </recommendedName>
    <alternativeName>
        <fullName>Nuclear receptor subfamily 3 group C member 3</fullName>
    </alternativeName>
</protein>
<keyword id="KW-0963">Cytoplasm</keyword>
<keyword id="KW-0238">DNA-binding</keyword>
<keyword id="KW-1017">Isopeptide bond</keyword>
<keyword id="KW-0446">Lipid-binding</keyword>
<keyword id="KW-0449">Lipoprotein</keyword>
<keyword id="KW-0479">Metal-binding</keyword>
<keyword id="KW-0539">Nucleus</keyword>
<keyword id="KW-0564">Palmitate</keyword>
<keyword id="KW-0597">Phosphoprotein</keyword>
<keyword id="KW-0675">Receptor</keyword>
<keyword id="KW-1185">Reference proteome</keyword>
<keyword id="KW-0754">Steroid-binding</keyword>
<keyword id="KW-0804">Transcription</keyword>
<keyword id="KW-0805">Transcription regulation</keyword>
<keyword id="KW-0832">Ubl conjugation</keyword>
<keyword id="KW-0862">Zinc</keyword>
<keyword id="KW-0863">Zinc-finger</keyword>